<protein>
    <recommendedName>
        <fullName evidence="1">Large ribosomal subunit protein bL28</fullName>
    </recommendedName>
    <alternativeName>
        <fullName evidence="2">50S ribosomal protein L28</fullName>
    </alternativeName>
</protein>
<dbReference type="EMBL" id="CR925677">
    <property type="protein sequence ID" value="CAI28002.1"/>
    <property type="molecule type" value="Genomic_DNA"/>
</dbReference>
<dbReference type="RefSeq" id="WP_011255663.1">
    <property type="nucleotide sequence ID" value="NC_006831.1"/>
</dbReference>
<dbReference type="SMR" id="Q5FFP1"/>
<dbReference type="KEGG" id="erg:ERGA_CDS_05500"/>
<dbReference type="HOGENOM" id="CLU_064548_4_2_5"/>
<dbReference type="OrthoDB" id="9805609at2"/>
<dbReference type="Proteomes" id="UP000000533">
    <property type="component" value="Chromosome"/>
</dbReference>
<dbReference type="GO" id="GO:1990904">
    <property type="term" value="C:ribonucleoprotein complex"/>
    <property type="evidence" value="ECO:0007669"/>
    <property type="project" value="UniProtKB-KW"/>
</dbReference>
<dbReference type="GO" id="GO:0005840">
    <property type="term" value="C:ribosome"/>
    <property type="evidence" value="ECO:0007669"/>
    <property type="project" value="UniProtKB-KW"/>
</dbReference>
<dbReference type="GO" id="GO:0003735">
    <property type="term" value="F:structural constituent of ribosome"/>
    <property type="evidence" value="ECO:0007669"/>
    <property type="project" value="InterPro"/>
</dbReference>
<dbReference type="GO" id="GO:0006412">
    <property type="term" value="P:translation"/>
    <property type="evidence" value="ECO:0007669"/>
    <property type="project" value="UniProtKB-UniRule"/>
</dbReference>
<dbReference type="Gene3D" id="2.30.170.40">
    <property type="entry name" value="Ribosomal protein L28/L24"/>
    <property type="match status" value="1"/>
</dbReference>
<dbReference type="HAMAP" id="MF_00373">
    <property type="entry name" value="Ribosomal_bL28"/>
    <property type="match status" value="1"/>
</dbReference>
<dbReference type="InterPro" id="IPR026569">
    <property type="entry name" value="Ribosomal_bL28"/>
</dbReference>
<dbReference type="InterPro" id="IPR034704">
    <property type="entry name" value="Ribosomal_bL28/bL31-like_sf"/>
</dbReference>
<dbReference type="InterPro" id="IPR001383">
    <property type="entry name" value="Ribosomal_bL28_bact-type"/>
</dbReference>
<dbReference type="InterPro" id="IPR037147">
    <property type="entry name" value="Ribosomal_bL28_sf"/>
</dbReference>
<dbReference type="NCBIfam" id="TIGR00009">
    <property type="entry name" value="L28"/>
    <property type="match status" value="1"/>
</dbReference>
<dbReference type="PANTHER" id="PTHR13528">
    <property type="entry name" value="39S RIBOSOMAL PROTEIN L28, MITOCHONDRIAL"/>
    <property type="match status" value="1"/>
</dbReference>
<dbReference type="PANTHER" id="PTHR13528:SF2">
    <property type="entry name" value="LARGE RIBOSOMAL SUBUNIT PROTEIN BL28M"/>
    <property type="match status" value="1"/>
</dbReference>
<dbReference type="Pfam" id="PF00830">
    <property type="entry name" value="Ribosomal_L28"/>
    <property type="match status" value="1"/>
</dbReference>
<dbReference type="SUPFAM" id="SSF143800">
    <property type="entry name" value="L28p-like"/>
    <property type="match status" value="1"/>
</dbReference>
<feature type="chain" id="PRO_1000007232" description="Large ribosomal subunit protein bL28">
    <location>
        <begin position="1"/>
        <end position="100"/>
    </location>
</feature>
<accession>Q5FFP1</accession>
<evidence type="ECO:0000255" key="1">
    <source>
        <dbReference type="HAMAP-Rule" id="MF_00373"/>
    </source>
</evidence>
<evidence type="ECO:0000305" key="2"/>
<proteinExistence type="inferred from homology"/>
<reference key="1">
    <citation type="journal article" date="2006" name="J. Bacteriol.">
        <title>Comparative genomic analysis of three strains of Ehrlichia ruminantium reveals an active process of genome size plasticity.</title>
        <authorList>
            <person name="Frutos R."/>
            <person name="Viari A."/>
            <person name="Ferraz C."/>
            <person name="Morgat A."/>
            <person name="Eychenie S."/>
            <person name="Kandassamy Y."/>
            <person name="Chantal I."/>
            <person name="Bensaid A."/>
            <person name="Coissac E."/>
            <person name="Vachiery N."/>
            <person name="Demaille J."/>
            <person name="Martinez D."/>
        </authorList>
    </citation>
    <scope>NUCLEOTIDE SEQUENCE [LARGE SCALE GENOMIC DNA]</scope>
    <source>
        <strain>Gardel</strain>
    </source>
</reference>
<sequence>MSRVCDITGQTKSFGNKVSHSNRKTKRTYLVNLHNVTLFSDVLNRKFRFKISSRTLRTIDYKGGFDLYLLETSSRKLSDKAQKIKKMIKKATAENVKVSL</sequence>
<keyword id="KW-0687">Ribonucleoprotein</keyword>
<keyword id="KW-0689">Ribosomal protein</keyword>
<name>RL28_EHRRG</name>
<organism>
    <name type="scientific">Ehrlichia ruminantium (strain Gardel)</name>
    <dbReference type="NCBI Taxonomy" id="302409"/>
    <lineage>
        <taxon>Bacteria</taxon>
        <taxon>Pseudomonadati</taxon>
        <taxon>Pseudomonadota</taxon>
        <taxon>Alphaproteobacteria</taxon>
        <taxon>Rickettsiales</taxon>
        <taxon>Anaplasmataceae</taxon>
        <taxon>Ehrlichia</taxon>
    </lineage>
</organism>
<comment type="similarity">
    <text evidence="1">Belongs to the bacterial ribosomal protein bL28 family.</text>
</comment>
<gene>
    <name evidence="1" type="primary">rpmB</name>
    <name type="ordered locus">ERGA_CDS_05500</name>
</gene>